<proteinExistence type="inferred from homology"/>
<comment type="function">
    <text evidence="2">Cell wall formation.</text>
</comment>
<comment type="catalytic activity">
    <reaction evidence="2">
        <text>2 D-alanine + ATP = D-alanyl-D-alanine + ADP + phosphate + H(+)</text>
        <dbReference type="Rhea" id="RHEA:11224"/>
        <dbReference type="ChEBI" id="CHEBI:15378"/>
        <dbReference type="ChEBI" id="CHEBI:30616"/>
        <dbReference type="ChEBI" id="CHEBI:43474"/>
        <dbReference type="ChEBI" id="CHEBI:57416"/>
        <dbReference type="ChEBI" id="CHEBI:57822"/>
        <dbReference type="ChEBI" id="CHEBI:456216"/>
        <dbReference type="EC" id="6.3.2.4"/>
    </reaction>
</comment>
<comment type="cofactor">
    <cofactor evidence="1">
        <name>Mg(2+)</name>
        <dbReference type="ChEBI" id="CHEBI:18420"/>
    </cofactor>
    <cofactor evidence="1">
        <name>Mn(2+)</name>
        <dbReference type="ChEBI" id="CHEBI:29035"/>
    </cofactor>
    <text evidence="1">Binds 2 magnesium or manganese ions per subunit.</text>
</comment>
<comment type="pathway">
    <text evidence="2">Cell wall biogenesis; peptidoglycan biosynthesis.</text>
</comment>
<comment type="subcellular location">
    <subcellularLocation>
        <location evidence="2">Cytoplasm</location>
    </subcellularLocation>
</comment>
<comment type="similarity">
    <text evidence="2">Belongs to the D-alanine--D-alanine ligase family.</text>
</comment>
<keyword id="KW-0067">ATP-binding</keyword>
<keyword id="KW-0133">Cell shape</keyword>
<keyword id="KW-0961">Cell wall biogenesis/degradation</keyword>
<keyword id="KW-0963">Cytoplasm</keyword>
<keyword id="KW-0436">Ligase</keyword>
<keyword id="KW-0460">Magnesium</keyword>
<keyword id="KW-0464">Manganese</keyword>
<keyword id="KW-0479">Metal-binding</keyword>
<keyword id="KW-0547">Nucleotide-binding</keyword>
<keyword id="KW-0573">Peptidoglycan synthesis</keyword>
<keyword id="KW-1185">Reference proteome</keyword>
<gene>
    <name evidence="2" type="primary">ddl</name>
    <name type="synonym">ddlA</name>
    <name type="ordered locus">SP_1671</name>
</gene>
<evidence type="ECO:0000250" key="1"/>
<evidence type="ECO:0000255" key="2">
    <source>
        <dbReference type="HAMAP-Rule" id="MF_00047"/>
    </source>
</evidence>
<evidence type="ECO:0000305" key="3"/>
<feature type="chain" id="PRO_0000177887" description="D-alanine--D-alanine ligase">
    <location>
        <begin position="1"/>
        <end position="347"/>
    </location>
</feature>
<feature type="domain" description="ATP-grasp" evidence="2">
    <location>
        <begin position="131"/>
        <end position="333"/>
    </location>
</feature>
<feature type="binding site" evidence="2">
    <location>
        <begin position="161"/>
        <end position="216"/>
    </location>
    <ligand>
        <name>ATP</name>
        <dbReference type="ChEBI" id="CHEBI:30616"/>
    </ligand>
</feature>
<feature type="binding site" evidence="2">
    <location>
        <position position="287"/>
    </location>
    <ligand>
        <name>Mg(2+)</name>
        <dbReference type="ChEBI" id="CHEBI:18420"/>
        <label>1</label>
    </ligand>
</feature>
<feature type="binding site" evidence="2">
    <location>
        <position position="300"/>
    </location>
    <ligand>
        <name>Mg(2+)</name>
        <dbReference type="ChEBI" id="CHEBI:18420"/>
        <label>1</label>
    </ligand>
</feature>
<feature type="binding site" evidence="2">
    <location>
        <position position="300"/>
    </location>
    <ligand>
        <name>Mg(2+)</name>
        <dbReference type="ChEBI" id="CHEBI:18420"/>
        <label>2</label>
    </ligand>
</feature>
<feature type="binding site" evidence="2">
    <location>
        <position position="302"/>
    </location>
    <ligand>
        <name>Mg(2+)</name>
        <dbReference type="ChEBI" id="CHEBI:18420"/>
        <label>2</label>
    </ligand>
</feature>
<feature type="sequence conflict" description="In Ref. 1; AAK75750." evidence="3" ref="1">
    <original>K</original>
    <variation>N</variation>
    <location>
        <position position="250"/>
    </location>
</feature>
<sequence>MKQTIILLYGGRSAEREVSVLSAESVMRAVDYDRFTVKTFFISQSGDFIKTQEFSHAPGQEDRLMTNETIDWDKKVAPSAIYEEGAVVFPVLHGPMGEDGSVQGFLEVLKMPYVGCNILSSSLAMDKITTKRVLESAGIAQVPYVAIVEGDDVTAKIAEVEEKLAYPVFTKPSNMGSSVGISKSENQEELRQALKLAFRYDSRVLVEQGVNAREIEVGLLGNYDVKSTLPGEVVKDVAFYDYDAKYIDNKITMDIPAKISDDVVAVMRQNAETAFRAIGGLGLSRCDFFYTDKGEIFLNELNTMPGFTQWSMYPLLWDNMGISYPKLIERLVDLAKESFDKREAHLI</sequence>
<organism>
    <name type="scientific">Streptococcus pneumoniae serotype 4 (strain ATCC BAA-334 / TIGR4)</name>
    <dbReference type="NCBI Taxonomy" id="170187"/>
    <lineage>
        <taxon>Bacteria</taxon>
        <taxon>Bacillati</taxon>
        <taxon>Bacillota</taxon>
        <taxon>Bacilli</taxon>
        <taxon>Lactobacillales</taxon>
        <taxon>Streptococcaceae</taxon>
        <taxon>Streptococcus</taxon>
    </lineage>
</organism>
<dbReference type="EC" id="6.3.2.4" evidence="2"/>
<dbReference type="EMBL" id="AE005672">
    <property type="protein sequence ID" value="AAK75750.1"/>
    <property type="molecule type" value="Genomic_DNA"/>
</dbReference>
<dbReference type="EMBL" id="AJ233887">
    <property type="protein sequence ID" value="CAA13580.1"/>
    <property type="molecule type" value="Genomic_DNA"/>
</dbReference>
<dbReference type="EMBL" id="Z99894">
    <property type="protein sequence ID" value="CAB17019.1"/>
    <property type="molecule type" value="Genomic_DNA"/>
</dbReference>
<dbReference type="EMBL" id="Z99837">
    <property type="protein sequence ID" value="CAB16962.1"/>
    <property type="molecule type" value="Genomic_DNA"/>
</dbReference>
<dbReference type="EMBL" id="Z99844">
    <property type="protein sequence ID" value="CAB16969.1"/>
    <property type="molecule type" value="Genomic_DNA"/>
</dbReference>
<dbReference type="EMBL" id="Z99845">
    <property type="protein sequence ID" value="CAB16970.1"/>
    <property type="molecule type" value="Genomic_DNA"/>
</dbReference>
<dbReference type="EMBL" id="Z99878">
    <property type="protein sequence ID" value="CAB17003.1"/>
    <property type="molecule type" value="Genomic_DNA"/>
</dbReference>
<dbReference type="EMBL" id="Z99893">
    <property type="protein sequence ID" value="CAB17018.1"/>
    <property type="molecule type" value="Genomic_DNA"/>
</dbReference>
<dbReference type="EMBL" id="AJ232272">
    <property type="protein sequence ID" value="CAA13275.1"/>
    <property type="molecule type" value="Genomic_DNA"/>
</dbReference>
<dbReference type="EMBL" id="AJ232245">
    <property type="protein sequence ID" value="CAA13248.1"/>
    <property type="molecule type" value="Genomic_DNA"/>
</dbReference>
<dbReference type="EMBL" id="AJ232254">
    <property type="protein sequence ID" value="CAA13257.1"/>
    <property type="molecule type" value="Genomic_DNA"/>
</dbReference>
<dbReference type="EMBL" id="AJ232260">
    <property type="protein sequence ID" value="CAA13263.1"/>
    <property type="molecule type" value="Genomic_DNA"/>
</dbReference>
<dbReference type="EMBL" id="AJ232267">
    <property type="protein sequence ID" value="CAA13270.1"/>
    <property type="molecule type" value="Genomic_DNA"/>
</dbReference>
<dbReference type="EMBL" id="AJ232268">
    <property type="protein sequence ID" value="CAA13271.1"/>
    <property type="molecule type" value="Genomic_DNA"/>
</dbReference>
<dbReference type="PIR" id="E95194">
    <property type="entry name" value="E95194"/>
</dbReference>
<dbReference type="SMR" id="P0CB57"/>
<dbReference type="PaxDb" id="170187-SP_1671"/>
<dbReference type="EnsemblBacteria" id="AAK75750">
    <property type="protein sequence ID" value="AAK75750"/>
    <property type="gene ID" value="SP_1671"/>
</dbReference>
<dbReference type="KEGG" id="spn:SP_1671"/>
<dbReference type="eggNOG" id="COG1181">
    <property type="taxonomic scope" value="Bacteria"/>
</dbReference>
<dbReference type="PhylomeDB" id="P0CB57"/>
<dbReference type="UniPathway" id="UPA00219"/>
<dbReference type="Proteomes" id="UP000000585">
    <property type="component" value="Chromosome"/>
</dbReference>
<dbReference type="GO" id="GO:0005829">
    <property type="term" value="C:cytosol"/>
    <property type="evidence" value="ECO:0007669"/>
    <property type="project" value="TreeGrafter"/>
</dbReference>
<dbReference type="GO" id="GO:0005524">
    <property type="term" value="F:ATP binding"/>
    <property type="evidence" value="ECO:0007669"/>
    <property type="project" value="UniProtKB-KW"/>
</dbReference>
<dbReference type="GO" id="GO:0008716">
    <property type="term" value="F:D-alanine-D-alanine ligase activity"/>
    <property type="evidence" value="ECO:0007669"/>
    <property type="project" value="UniProtKB-UniRule"/>
</dbReference>
<dbReference type="GO" id="GO:0046872">
    <property type="term" value="F:metal ion binding"/>
    <property type="evidence" value="ECO:0007669"/>
    <property type="project" value="UniProtKB-KW"/>
</dbReference>
<dbReference type="GO" id="GO:0071555">
    <property type="term" value="P:cell wall organization"/>
    <property type="evidence" value="ECO:0007669"/>
    <property type="project" value="UniProtKB-KW"/>
</dbReference>
<dbReference type="GO" id="GO:0009252">
    <property type="term" value="P:peptidoglycan biosynthetic process"/>
    <property type="evidence" value="ECO:0007669"/>
    <property type="project" value="UniProtKB-UniRule"/>
</dbReference>
<dbReference type="GO" id="GO:0008360">
    <property type="term" value="P:regulation of cell shape"/>
    <property type="evidence" value="ECO:0007669"/>
    <property type="project" value="UniProtKB-KW"/>
</dbReference>
<dbReference type="FunFam" id="3.30.1490.20:FF:000007">
    <property type="entry name" value="D-alanine--D-alanine ligase"/>
    <property type="match status" value="1"/>
</dbReference>
<dbReference type="FunFam" id="3.30.470.20:FF:000008">
    <property type="entry name" value="D-alanine--D-alanine ligase"/>
    <property type="match status" value="1"/>
</dbReference>
<dbReference type="FunFam" id="3.40.50.20:FF:000029">
    <property type="entry name" value="D-alanine--D-alanine ligase"/>
    <property type="match status" value="1"/>
</dbReference>
<dbReference type="Gene3D" id="3.40.50.20">
    <property type="match status" value="1"/>
</dbReference>
<dbReference type="Gene3D" id="3.30.1490.20">
    <property type="entry name" value="ATP-grasp fold, A domain"/>
    <property type="match status" value="1"/>
</dbReference>
<dbReference type="Gene3D" id="3.30.470.20">
    <property type="entry name" value="ATP-grasp fold, B domain"/>
    <property type="match status" value="1"/>
</dbReference>
<dbReference type="HAMAP" id="MF_00047">
    <property type="entry name" value="Dala_Dala_lig"/>
    <property type="match status" value="1"/>
</dbReference>
<dbReference type="InterPro" id="IPR011761">
    <property type="entry name" value="ATP-grasp"/>
</dbReference>
<dbReference type="InterPro" id="IPR013815">
    <property type="entry name" value="ATP_grasp_subdomain_1"/>
</dbReference>
<dbReference type="InterPro" id="IPR000291">
    <property type="entry name" value="D-Ala_lig_Van_CS"/>
</dbReference>
<dbReference type="InterPro" id="IPR005905">
    <property type="entry name" value="D_ala_D_ala"/>
</dbReference>
<dbReference type="InterPro" id="IPR011095">
    <property type="entry name" value="Dala_Dala_lig_C"/>
</dbReference>
<dbReference type="InterPro" id="IPR011127">
    <property type="entry name" value="Dala_Dala_lig_N"/>
</dbReference>
<dbReference type="InterPro" id="IPR016185">
    <property type="entry name" value="PreATP-grasp_dom_sf"/>
</dbReference>
<dbReference type="NCBIfam" id="TIGR01205">
    <property type="entry name" value="D_ala_D_alaTIGR"/>
    <property type="match status" value="1"/>
</dbReference>
<dbReference type="NCBIfam" id="NF002528">
    <property type="entry name" value="PRK01966.1-4"/>
    <property type="match status" value="1"/>
</dbReference>
<dbReference type="NCBIfam" id="NF002529">
    <property type="entry name" value="PRK01966.1-5"/>
    <property type="match status" value="1"/>
</dbReference>
<dbReference type="PANTHER" id="PTHR23132">
    <property type="entry name" value="D-ALANINE--D-ALANINE LIGASE"/>
    <property type="match status" value="1"/>
</dbReference>
<dbReference type="PANTHER" id="PTHR23132:SF25">
    <property type="entry name" value="D-ALANINE--D-ALANINE LIGASE A"/>
    <property type="match status" value="1"/>
</dbReference>
<dbReference type="Pfam" id="PF07478">
    <property type="entry name" value="Dala_Dala_lig_C"/>
    <property type="match status" value="1"/>
</dbReference>
<dbReference type="Pfam" id="PF01820">
    <property type="entry name" value="Dala_Dala_lig_N"/>
    <property type="match status" value="1"/>
</dbReference>
<dbReference type="PIRSF" id="PIRSF039102">
    <property type="entry name" value="Ddl/VanB"/>
    <property type="match status" value="1"/>
</dbReference>
<dbReference type="SUPFAM" id="SSF56059">
    <property type="entry name" value="Glutathione synthetase ATP-binding domain-like"/>
    <property type="match status" value="1"/>
</dbReference>
<dbReference type="SUPFAM" id="SSF52440">
    <property type="entry name" value="PreATP-grasp domain"/>
    <property type="match status" value="1"/>
</dbReference>
<dbReference type="PROSITE" id="PS50975">
    <property type="entry name" value="ATP_GRASP"/>
    <property type="match status" value="1"/>
</dbReference>
<dbReference type="PROSITE" id="PS00843">
    <property type="entry name" value="DALA_DALA_LIGASE_1"/>
    <property type="match status" value="1"/>
</dbReference>
<dbReference type="PROSITE" id="PS00844">
    <property type="entry name" value="DALA_DALA_LIGASE_2"/>
    <property type="match status" value="1"/>
</dbReference>
<protein>
    <recommendedName>
        <fullName evidence="2">D-alanine--D-alanine ligase</fullName>
        <ecNumber evidence="2">6.3.2.4</ecNumber>
    </recommendedName>
    <alternativeName>
        <fullName evidence="2">D-Ala-D-Ala ligase</fullName>
    </alternativeName>
    <alternativeName>
        <fullName evidence="2">D-alanylalanine synthetase</fullName>
    </alternativeName>
</protein>
<reference key="1">
    <citation type="journal article" date="2001" name="Science">
        <title>Complete genome sequence of a virulent isolate of Streptococcus pneumoniae.</title>
        <authorList>
            <person name="Tettelin H."/>
            <person name="Nelson K.E."/>
            <person name="Paulsen I.T."/>
            <person name="Eisen J.A."/>
            <person name="Read T.D."/>
            <person name="Peterson S.N."/>
            <person name="Heidelberg J.F."/>
            <person name="DeBoy R.T."/>
            <person name="Haft D.H."/>
            <person name="Dodson R.J."/>
            <person name="Durkin A.S."/>
            <person name="Gwinn M.L."/>
            <person name="Kolonay J.F."/>
            <person name="Nelson W.C."/>
            <person name="Peterson J.D."/>
            <person name="Umayam L.A."/>
            <person name="White O."/>
            <person name="Salzberg S.L."/>
            <person name="Lewis M.R."/>
            <person name="Radune D."/>
            <person name="Holtzapple E.K."/>
            <person name="Khouri H.M."/>
            <person name="Wolf A.M."/>
            <person name="Utterback T.R."/>
            <person name="Hansen C.L."/>
            <person name="McDonald L.A."/>
            <person name="Feldblyum T.V."/>
            <person name="Angiuoli S.V."/>
            <person name="Dickinson T."/>
            <person name="Hickey E.K."/>
            <person name="Holt I.E."/>
            <person name="Loftus B.J."/>
            <person name="Yang F."/>
            <person name="Smith H.O."/>
            <person name="Venter J.C."/>
            <person name="Dougherty B.A."/>
            <person name="Morrison D.A."/>
            <person name="Hollingshead S.K."/>
            <person name="Fraser C.M."/>
        </authorList>
    </citation>
    <scope>NUCLEOTIDE SEQUENCE [LARGE SCALE GENOMIC DNA]</scope>
    <source>
        <strain>ATCC BAA-334 / TIGR4</strain>
    </source>
</reference>
<reference key="2">
    <citation type="submission" date="1998-09" db="EMBL/GenBank/DDBJ databases">
        <title>Identification of three major clones of multiply antibiotic resistant Streptococcus pneumoniae in Taiwanese hospitals using multilocus sequence typing.</title>
        <authorList>
            <person name="Zhi-Yuan S."/>
            <person name="Enright M.C."/>
            <person name="Wilkinson P."/>
            <person name="Spratt B.G."/>
        </authorList>
    </citation>
    <scope>NUCLEOTIDE SEQUENCE [GENOMIC DNA] OF 155-300</scope>
</reference>
<reference key="3">
    <citation type="submission" date="1998-01" db="EMBL/GenBank/DDBJ databases">
        <title>Recombinational exchanges at the capsular polysaccharide biosynthetic locus lead to frequent serotype changes among natural isolates of Streptococcus pneumoniae.</title>
        <authorList>
            <person name="Coffey T.J."/>
            <person name="Enright M.C."/>
            <person name="Daniels M."/>
            <person name="Wilkinson P."/>
            <person name="Berron S."/>
            <person name="Fenoll A."/>
            <person name="Spratt B.G."/>
        </authorList>
    </citation>
    <scope>NUCLEOTIDE SEQUENCE [GENOMIC DNA] OF 155-301</scope>
    <source>
        <strain>Various strains</strain>
    </source>
</reference>
<reference key="4">
    <citation type="journal article" date="1998" name="Microbiology">
        <title>A multilocus sequence typing scheme for Streptococcus pneumoniae: identification of clones associated with serious invasive disease.</title>
        <authorList>
            <person name="Enright M.C."/>
            <person name="Spratt B.G."/>
        </authorList>
    </citation>
    <scope>NUCLEOTIDE SEQUENCE [GENOMIC DNA] OF 155-301</scope>
    <source>
        <strain>Various strains</strain>
    </source>
</reference>
<name>DDL_STRPN</name>
<accession>P0CB57</accession>
<accession>O54631</accession>